<reference key="1">
    <citation type="submission" date="2000-02" db="EMBL/GenBank/DDBJ databases">
        <title>Cloning and sequencing of ornithine carbamoytransferase of Staphylococcus aureus Newman.</title>
        <authorList>
            <person name="Hussain Shaikh M."/>
            <person name="Peters G."/>
            <person name="Herrmann M."/>
        </authorList>
    </citation>
    <scope>NUCLEOTIDE SEQUENCE [GENOMIC DNA]</scope>
</reference>
<reference key="2">
    <citation type="journal article" date="2008" name="J. Bacteriol.">
        <title>Genome sequence of Staphylococcus aureus strain Newman and comparative analysis of staphylococcal genomes: polymorphism and evolution of two major pathogenicity islands.</title>
        <authorList>
            <person name="Baba T."/>
            <person name="Bae T."/>
            <person name="Schneewind O."/>
            <person name="Takeuchi F."/>
            <person name="Hiramatsu K."/>
        </authorList>
    </citation>
    <scope>NUCLEOTIDE SEQUENCE [LARGE SCALE GENOMIC DNA]</scope>
    <source>
        <strain>Newman</strain>
    </source>
</reference>
<comment type="function">
    <text evidence="1">Reversibly catalyzes the transfer of the carbamoyl group from carbamoyl phosphate (CP) to the N(epsilon) atom of ornithine (ORN) to produce L-citrulline.</text>
</comment>
<comment type="catalytic activity">
    <reaction>
        <text>carbamoyl phosphate + L-ornithine = L-citrulline + phosphate + H(+)</text>
        <dbReference type="Rhea" id="RHEA:19513"/>
        <dbReference type="ChEBI" id="CHEBI:15378"/>
        <dbReference type="ChEBI" id="CHEBI:43474"/>
        <dbReference type="ChEBI" id="CHEBI:46911"/>
        <dbReference type="ChEBI" id="CHEBI:57743"/>
        <dbReference type="ChEBI" id="CHEBI:58228"/>
        <dbReference type="EC" id="2.1.3.3"/>
    </reaction>
</comment>
<comment type="pathway">
    <text>Amino-acid biosynthesis; L-arginine biosynthesis; L-arginine from L-ornithine and carbamoyl phosphate: step 1/3.</text>
</comment>
<comment type="subcellular location">
    <subcellularLocation>
        <location evidence="1">Cytoplasm</location>
    </subcellularLocation>
</comment>
<comment type="similarity">
    <text evidence="3">Belongs to the aspartate/ornithine carbamoyltransferase superfamily. OTCase family.</text>
</comment>
<comment type="sequence caution" evidence="3">
    <conflict type="erroneous initiation">
        <sequence resource="EMBL-CDS" id="BAF67350"/>
    </conflict>
</comment>
<name>OTC_STAAE</name>
<dbReference type="EC" id="2.1.3.3"/>
<dbReference type="EMBL" id="AJ272085">
    <property type="protein sequence ID" value="CAB75986.1"/>
    <property type="molecule type" value="Genomic_DNA"/>
</dbReference>
<dbReference type="EMBL" id="AP009351">
    <property type="protein sequence ID" value="BAF67350.1"/>
    <property type="status" value="ALT_INIT"/>
    <property type="molecule type" value="Genomic_DNA"/>
</dbReference>
<dbReference type="RefSeq" id="WP_000793605.1">
    <property type="nucleotide sequence ID" value="NZ_JBBIAE010000001.1"/>
</dbReference>
<dbReference type="SMR" id="A6QG68"/>
<dbReference type="KEGG" id="sae:NWMN_1078"/>
<dbReference type="HOGENOM" id="CLU_043846_3_1_9"/>
<dbReference type="UniPathway" id="UPA00068">
    <property type="reaction ID" value="UER00112"/>
</dbReference>
<dbReference type="Proteomes" id="UP000006386">
    <property type="component" value="Chromosome"/>
</dbReference>
<dbReference type="GO" id="GO:0005737">
    <property type="term" value="C:cytoplasm"/>
    <property type="evidence" value="ECO:0007669"/>
    <property type="project" value="UniProtKB-SubCell"/>
</dbReference>
<dbReference type="GO" id="GO:0016597">
    <property type="term" value="F:amino acid binding"/>
    <property type="evidence" value="ECO:0007669"/>
    <property type="project" value="InterPro"/>
</dbReference>
<dbReference type="GO" id="GO:0004585">
    <property type="term" value="F:ornithine carbamoyltransferase activity"/>
    <property type="evidence" value="ECO:0007669"/>
    <property type="project" value="UniProtKB-UniRule"/>
</dbReference>
<dbReference type="GO" id="GO:0042450">
    <property type="term" value="P:arginine biosynthetic process via ornithine"/>
    <property type="evidence" value="ECO:0007669"/>
    <property type="project" value="TreeGrafter"/>
</dbReference>
<dbReference type="GO" id="GO:0019240">
    <property type="term" value="P:citrulline biosynthetic process"/>
    <property type="evidence" value="ECO:0007669"/>
    <property type="project" value="TreeGrafter"/>
</dbReference>
<dbReference type="GO" id="GO:0006526">
    <property type="term" value="P:L-arginine biosynthetic process"/>
    <property type="evidence" value="ECO:0007669"/>
    <property type="project" value="UniProtKB-UniPathway"/>
</dbReference>
<dbReference type="FunFam" id="3.40.50.1370:FF:000004">
    <property type="entry name" value="Ornithine carbamoyltransferase"/>
    <property type="match status" value="1"/>
</dbReference>
<dbReference type="Gene3D" id="3.40.50.1370">
    <property type="entry name" value="Aspartate/ornithine carbamoyltransferase"/>
    <property type="match status" value="2"/>
</dbReference>
<dbReference type="HAMAP" id="MF_01109">
    <property type="entry name" value="OTCase"/>
    <property type="match status" value="1"/>
</dbReference>
<dbReference type="InterPro" id="IPR006132">
    <property type="entry name" value="Asp/Orn_carbamoyltranf_P-bd"/>
</dbReference>
<dbReference type="InterPro" id="IPR006130">
    <property type="entry name" value="Asp/Orn_carbamoylTrfase"/>
</dbReference>
<dbReference type="InterPro" id="IPR036901">
    <property type="entry name" value="Asp/Orn_carbamoylTrfase_sf"/>
</dbReference>
<dbReference type="InterPro" id="IPR006131">
    <property type="entry name" value="Asp_carbamoyltransf_Asp/Orn-bd"/>
</dbReference>
<dbReference type="InterPro" id="IPR002292">
    <property type="entry name" value="Orn/put_carbamltrans"/>
</dbReference>
<dbReference type="InterPro" id="IPR024904">
    <property type="entry name" value="OTCase_ArgI"/>
</dbReference>
<dbReference type="NCBIfam" id="TIGR00658">
    <property type="entry name" value="orni_carb_tr"/>
    <property type="match status" value="1"/>
</dbReference>
<dbReference type="NCBIfam" id="NF001986">
    <property type="entry name" value="PRK00779.1"/>
    <property type="match status" value="1"/>
</dbReference>
<dbReference type="NCBIfam" id="NF003286">
    <property type="entry name" value="PRK04284.1"/>
    <property type="match status" value="1"/>
</dbReference>
<dbReference type="PANTHER" id="PTHR45753:SF2">
    <property type="entry name" value="ORNITHINE CARBAMOYLTRANSFERASE"/>
    <property type="match status" value="1"/>
</dbReference>
<dbReference type="PANTHER" id="PTHR45753">
    <property type="entry name" value="ORNITHINE CARBAMOYLTRANSFERASE, MITOCHONDRIAL"/>
    <property type="match status" value="1"/>
</dbReference>
<dbReference type="Pfam" id="PF00185">
    <property type="entry name" value="OTCace"/>
    <property type="match status" value="1"/>
</dbReference>
<dbReference type="Pfam" id="PF02729">
    <property type="entry name" value="OTCace_N"/>
    <property type="match status" value="1"/>
</dbReference>
<dbReference type="PRINTS" id="PR00100">
    <property type="entry name" value="AOTCASE"/>
</dbReference>
<dbReference type="PRINTS" id="PR00102">
    <property type="entry name" value="OTCASE"/>
</dbReference>
<dbReference type="SUPFAM" id="SSF53671">
    <property type="entry name" value="Aspartate/ornithine carbamoyltransferase"/>
    <property type="match status" value="1"/>
</dbReference>
<dbReference type="PROSITE" id="PS00097">
    <property type="entry name" value="CARBAMOYLTRANSFERASE"/>
    <property type="match status" value="1"/>
</dbReference>
<gene>
    <name type="primary">argF</name>
    <name type="ordered locus">NWMN_1078</name>
</gene>
<evidence type="ECO:0000250" key="1"/>
<evidence type="ECO:0000255" key="2">
    <source>
        <dbReference type="HAMAP-Rule" id="MF_01109"/>
    </source>
</evidence>
<evidence type="ECO:0000305" key="3"/>
<sequence length="333" mass="37517">MKNLRNRSFLTLLDFSRQEVEFLLTLSEDLKRAKYIGTEKPMLKNKNIALLFEKDSTRTRCAFEVAAHDQGANVTYLGPTGSQMGKKETTKDTARVLGGMYDGIEYRGFSQRTVETLAEYSGVPVWNGLTDEDHPTQVLADFLTAKEVLKKDYADINFTYVGDGRNNVANALMQGAAIMGMNFHLVCPKELNPTDELLNRCKNIAAENGGNILITDDIDQGVKGSDVIYTDVWVSMGEPDEVWKERLELLKPYQVNKEIMDKTGNPNVIFEHCLPSFHNADTKIGQQIFEKYGIREMEVTDEVFESKASVVFQEAENRMHTIKAVMVATLGEF</sequence>
<accession>A6QG68</accession>
<accession>P0A0A0</accession>
<accession>Q9K3A1</accession>
<keyword id="KW-0028">Amino-acid biosynthesis</keyword>
<keyword id="KW-0055">Arginine biosynthesis</keyword>
<keyword id="KW-0963">Cytoplasm</keyword>
<keyword id="KW-0808">Transferase</keyword>
<protein>
    <recommendedName>
        <fullName>Ornithine carbamoyltransferase</fullName>
        <shortName>OTCase</shortName>
        <ecNumber>2.1.3.3</ecNumber>
    </recommendedName>
</protein>
<proteinExistence type="inferred from homology"/>
<feature type="chain" id="PRO_0000324105" description="Ornithine carbamoyltransferase">
    <location>
        <begin position="1"/>
        <end position="333"/>
    </location>
</feature>
<feature type="binding site" evidence="2">
    <location>
        <begin position="56"/>
        <end position="59"/>
    </location>
    <ligand>
        <name>carbamoyl phosphate</name>
        <dbReference type="ChEBI" id="CHEBI:58228"/>
    </ligand>
</feature>
<feature type="binding site" evidence="2">
    <location>
        <position position="83"/>
    </location>
    <ligand>
        <name>carbamoyl phosphate</name>
        <dbReference type="ChEBI" id="CHEBI:58228"/>
    </ligand>
</feature>
<feature type="binding site" evidence="2">
    <location>
        <position position="107"/>
    </location>
    <ligand>
        <name>carbamoyl phosphate</name>
        <dbReference type="ChEBI" id="CHEBI:58228"/>
    </ligand>
</feature>
<feature type="binding site" evidence="2">
    <location>
        <begin position="134"/>
        <end position="137"/>
    </location>
    <ligand>
        <name>carbamoyl phosphate</name>
        <dbReference type="ChEBI" id="CHEBI:58228"/>
    </ligand>
</feature>
<feature type="binding site" evidence="2">
    <location>
        <position position="167"/>
    </location>
    <ligand>
        <name>L-ornithine</name>
        <dbReference type="ChEBI" id="CHEBI:46911"/>
    </ligand>
</feature>
<feature type="binding site" evidence="2">
    <location>
        <position position="231"/>
    </location>
    <ligand>
        <name>L-ornithine</name>
        <dbReference type="ChEBI" id="CHEBI:46911"/>
    </ligand>
</feature>
<feature type="binding site" evidence="2">
    <location>
        <begin position="235"/>
        <end position="236"/>
    </location>
    <ligand>
        <name>L-ornithine</name>
        <dbReference type="ChEBI" id="CHEBI:46911"/>
    </ligand>
</feature>
<feature type="binding site" evidence="2">
    <location>
        <begin position="273"/>
        <end position="274"/>
    </location>
    <ligand>
        <name>carbamoyl phosphate</name>
        <dbReference type="ChEBI" id="CHEBI:58228"/>
    </ligand>
</feature>
<feature type="binding site" evidence="2">
    <location>
        <position position="318"/>
    </location>
    <ligand>
        <name>carbamoyl phosphate</name>
        <dbReference type="ChEBI" id="CHEBI:58228"/>
    </ligand>
</feature>
<feature type="sequence conflict" description="In Ref. 1; CAB75986." evidence="3" ref="1">
    <original>I</original>
    <variation>M</variation>
    <location>
        <position position="259"/>
    </location>
</feature>
<organism>
    <name type="scientific">Staphylococcus aureus (strain Newman)</name>
    <dbReference type="NCBI Taxonomy" id="426430"/>
    <lineage>
        <taxon>Bacteria</taxon>
        <taxon>Bacillati</taxon>
        <taxon>Bacillota</taxon>
        <taxon>Bacilli</taxon>
        <taxon>Bacillales</taxon>
        <taxon>Staphylococcaceae</taxon>
        <taxon>Staphylococcus</taxon>
    </lineage>
</organism>